<sequence length="148" mass="16829">KLKASDSRSFLDPMPEGVPLSELELDKDEKFSTMEEERRKLIAEDREGNATRIAELEVAMNEHSHELAKLKASDSRSFLDPMPEGVPLSELELDKDEKFSTMEEERRKLIAEDREGNAARIAELEVAMNEHSHELAKLKASDSRSFQS</sequence>
<reference key="1">
    <citation type="journal article" date="1992" name="Parasitology">
        <title>Identification and characterization of two repetitive non-variable antigens from African trypanosomes which are recognized early during infection.</title>
        <authorList>
            <person name="Mueller N."/>
            <person name="Hemphill A."/>
            <person name="Imboden M."/>
            <person name="Duvallet G."/>
            <person name="Dwinger R.H."/>
            <person name="Seebeck T."/>
        </authorList>
    </citation>
    <scope>NUCLEOTIDE SEQUENCE [MRNA]</scope>
</reference>
<name>GM6_TRYBG</name>
<comment type="subcellular location">
    <subcellularLocation>
        <location>Cytoplasm</location>
        <location>Cytoskeleton</location>
    </subcellularLocation>
    <text>Located on fibers which connect the microtubules of the membrane skeleton with the flagellum.</text>
</comment>
<keyword id="KW-0963">Cytoplasm</keyword>
<keyword id="KW-0206">Cytoskeleton</keyword>
<keyword id="KW-0677">Repeat</keyword>
<protein>
    <recommendedName>
        <fullName>Antigen GM6</fullName>
    </recommendedName>
</protein>
<proteinExistence type="evidence at transcript level"/>
<gene>
    <name type="primary">GM6</name>
</gene>
<dbReference type="EMBL" id="X58788">
    <property type="protein sequence ID" value="CAA41594.1"/>
    <property type="molecule type" value="mRNA"/>
</dbReference>
<dbReference type="SMR" id="Q26755"/>
<dbReference type="GO" id="GO:0005737">
    <property type="term" value="C:cytoplasm"/>
    <property type="evidence" value="ECO:0007669"/>
    <property type="project" value="UniProtKB-KW"/>
</dbReference>
<dbReference type="GO" id="GO:0005856">
    <property type="term" value="C:cytoskeleton"/>
    <property type="evidence" value="ECO:0007669"/>
    <property type="project" value="UniProtKB-SubCell"/>
</dbReference>
<dbReference type="InterPro" id="IPR056040">
    <property type="entry name" value="DUF7623"/>
</dbReference>
<dbReference type="Pfam" id="PF24610">
    <property type="entry name" value="DUF7623"/>
    <property type="match status" value="2"/>
</dbReference>
<accession>Q26755</accession>
<evidence type="ECO:0000256" key="1">
    <source>
        <dbReference type="SAM" id="MobiDB-lite"/>
    </source>
</evidence>
<feature type="chain" id="PRO_0000087519" description="Antigen GM6">
    <location>
        <begin position="1" status="less than"/>
        <end position="148"/>
    </location>
</feature>
<feature type="repeat" description="1">
    <location>
        <begin position="1"/>
        <end position="68"/>
    </location>
</feature>
<feature type="repeat" description="2">
    <location>
        <begin position="69"/>
        <end position="136"/>
    </location>
</feature>
<feature type="repeat" description="3; truncated">
    <location>
        <begin position="137"/>
        <end position="148"/>
    </location>
</feature>
<feature type="region of interest" description="Disordered" evidence="1">
    <location>
        <begin position="1"/>
        <end position="22"/>
    </location>
</feature>
<feature type="non-terminal residue">
    <location>
        <position position="1"/>
    </location>
</feature>
<organism>
    <name type="scientific">Trypanosoma brucei gambiense</name>
    <dbReference type="NCBI Taxonomy" id="31285"/>
    <lineage>
        <taxon>Eukaryota</taxon>
        <taxon>Discoba</taxon>
        <taxon>Euglenozoa</taxon>
        <taxon>Kinetoplastea</taxon>
        <taxon>Metakinetoplastina</taxon>
        <taxon>Trypanosomatida</taxon>
        <taxon>Trypanosomatidae</taxon>
        <taxon>Trypanosoma</taxon>
    </lineage>
</organism>